<organism>
    <name type="scientific">Mycoplasma pneumoniae (strain ATCC 29342 / M129 / Subtype 1)</name>
    <name type="common">Mycoplasmoides pneumoniae</name>
    <dbReference type="NCBI Taxonomy" id="272634"/>
    <lineage>
        <taxon>Bacteria</taxon>
        <taxon>Bacillati</taxon>
        <taxon>Mycoplasmatota</taxon>
        <taxon>Mycoplasmoidales</taxon>
        <taxon>Mycoplasmoidaceae</taxon>
        <taxon>Mycoplasmoides</taxon>
    </lineage>
</organism>
<keyword id="KW-1003">Cell membrane</keyword>
<keyword id="KW-0449">Lipoprotein</keyword>
<keyword id="KW-0472">Membrane</keyword>
<keyword id="KW-0564">Palmitate</keyword>
<keyword id="KW-1185">Reference proteome</keyword>
<keyword id="KW-0732">Signal</keyword>
<reference key="1">
    <citation type="journal article" date="1996" name="Nucleic Acids Res.">
        <title>Sequence analysis of 56 kb from the genome of the bacterium Mycoplasma pneumoniae comprising the dnaA region, the atp operon and a cluster of ribosomal protein genes.</title>
        <authorList>
            <person name="Hilbert H."/>
            <person name="Himmelreich R."/>
            <person name="Plagens H."/>
            <person name="Herrmann R."/>
        </authorList>
    </citation>
    <scope>NUCLEOTIDE SEQUENCE [GENOMIC DNA]</scope>
    <source>
        <strain>ATCC 29342 / M129 / Subtype 1</strain>
    </source>
</reference>
<reference key="2">
    <citation type="journal article" date="1996" name="Nucleic Acids Res.">
        <title>Complete sequence analysis of the genome of the bacterium Mycoplasma pneumoniae.</title>
        <authorList>
            <person name="Himmelreich R."/>
            <person name="Hilbert H."/>
            <person name="Plagens H."/>
            <person name="Pirkl E."/>
            <person name="Li B.-C."/>
            <person name="Herrmann R."/>
        </authorList>
    </citation>
    <scope>NUCLEOTIDE SEQUENCE [LARGE SCALE GENOMIC DNA]</scope>
    <source>
        <strain>ATCC 29342 / M129 / Subtype 1</strain>
    </source>
</reference>
<protein>
    <recommendedName>
        <fullName>Uncharacterized lipoprotein MPN_200</fullName>
    </recommendedName>
</protein>
<dbReference type="EMBL" id="U34795">
    <property type="protein sequence ID" value="AAC43681.1"/>
    <property type="molecule type" value="Genomic_DNA"/>
</dbReference>
<dbReference type="EMBL" id="U00089">
    <property type="protein sequence ID" value="AAB96279.1"/>
    <property type="molecule type" value="Genomic_DNA"/>
</dbReference>
<dbReference type="PIR" id="S62791">
    <property type="entry name" value="S62791"/>
</dbReference>
<dbReference type="RefSeq" id="NP_109888.1">
    <property type="nucleotide sequence ID" value="NC_000912.1"/>
</dbReference>
<dbReference type="RefSeq" id="WP_010874557.1">
    <property type="nucleotide sequence ID" value="NC_000912.1"/>
</dbReference>
<dbReference type="IntAct" id="Q50288">
    <property type="interactions" value="1"/>
</dbReference>
<dbReference type="STRING" id="272634.MPN_200"/>
<dbReference type="EnsemblBacteria" id="AAB96279">
    <property type="protein sequence ID" value="AAB96279"/>
    <property type="gene ID" value="MPN_200"/>
</dbReference>
<dbReference type="KEGG" id="mpn:MPN_200"/>
<dbReference type="PATRIC" id="fig|272634.6.peg.219"/>
<dbReference type="HOGENOM" id="CLU_017227_1_0_14"/>
<dbReference type="OrthoDB" id="393769at2"/>
<dbReference type="BioCyc" id="MPNE272634:G1GJ3-323-MONOMER"/>
<dbReference type="Proteomes" id="UP000000808">
    <property type="component" value="Chromosome"/>
</dbReference>
<dbReference type="GO" id="GO:0005886">
    <property type="term" value="C:plasma membrane"/>
    <property type="evidence" value="ECO:0007669"/>
    <property type="project" value="UniProtKB-SubCell"/>
</dbReference>
<dbReference type="InterPro" id="IPR004890">
    <property type="entry name" value="Lipoprotein_10_C"/>
</dbReference>
<dbReference type="InterPro" id="IPR004984">
    <property type="entry name" value="Mycoplasma_lipoprotein_cen_dom"/>
</dbReference>
<dbReference type="InterPro" id="IPR054825">
    <property type="entry name" value="P68-like"/>
</dbReference>
<dbReference type="NCBIfam" id="NF045826">
    <property type="entry name" value="lipo_P68"/>
    <property type="match status" value="1"/>
</dbReference>
<dbReference type="Pfam" id="PF03202">
    <property type="entry name" value="Lipoprotein_10"/>
    <property type="match status" value="1"/>
</dbReference>
<dbReference type="Pfam" id="PF03305">
    <property type="entry name" value="Lipoprotein_X"/>
    <property type="match status" value="1"/>
</dbReference>
<dbReference type="PROSITE" id="PS51257">
    <property type="entry name" value="PROKAR_LIPOPROTEIN"/>
    <property type="match status" value="1"/>
</dbReference>
<sequence>MKFKYGAIVFSGLLGVSAILAACGTRGKFDQIDDGKIKLASSLTSKGAANALQAIVKKYNEVKKPGDYPIEITQIAGGYDQARVDLQSRVGVKDKTNFYNLILNYPDVVSVLARNQMELPFDGVDVSKISPNFLNFNERISGVSKKANYAIPVSVSTDILVLNGPVLHYILNSAKGESKGAQKDNKSAEVQRKSTGQKTVTQPLTIATDSATNGLWKKIEDAAKVNGKKKEEKKSTRSKRATEGTQTTKENTGGDAATSDTKIKESWGAYQEVEGGLKGYQFKAIVFENWHDLIDFSTRVAKSFSKVKDNSNKKGNEIQGVLGVDNSPNALLSSVFAAGNSDYNNFFYKVQNGRADFSNFNNKGSSYKNLKNVFNDYKNLIAQNGLYVNKGGSYSSNFQKFHQLAYSISSTSGFAYSFAGQNSKRFKFTDDGTFVEYPSYTTEVNAPESNNGNDGKQQGQSDQGNLLGTFEVVDKSTSDIKVKPKTQAESKKSSDSKQTANTGKGSNSKQQTPKKTISLYKTKIPQDKTENVDAFLVTDSELISKLEKAKNKKEETKASGKSASARVAVQATQKKQSNEKQIVGYTTTSALSEDGKHIFKLGKLNSENYERKIIVGATVETLEQSTTLQSEEAIVLAAPGKYKDSDQKRVMITQGPNLIGVHANTKENEETKKFVNWFLNKTESWEVKGNGKDSQTTKSLTPAQYFAESASYILPLKETVEKDHKEQTNKNTYVAKALEMLKEVSENKSVSYSDPSDFRSGRFRDALGANFNATINSKANFEKFFQGFKAALGSDFDK</sequence>
<proteinExistence type="inferred from homology"/>
<accession>Q50288</accession>
<gene>
    <name type="ordered locus">MPN_200</name>
    <name type="ORF">GT9_orf798</name>
    <name type="ORF">MP631</name>
</gene>
<evidence type="ECO:0000255" key="1">
    <source>
        <dbReference type="PROSITE-ProRule" id="PRU00303"/>
    </source>
</evidence>
<evidence type="ECO:0000256" key="2">
    <source>
        <dbReference type="SAM" id="MobiDB-lite"/>
    </source>
</evidence>
<evidence type="ECO:0000305" key="3"/>
<feature type="signal peptide" evidence="1">
    <location>
        <begin position="1"/>
        <end position="22"/>
    </location>
</feature>
<feature type="chain" id="PRO_0000018728" description="Uncharacterized lipoprotein MPN_200">
    <location>
        <begin position="23"/>
        <end position="798"/>
    </location>
</feature>
<feature type="region of interest" description="Disordered" evidence="2">
    <location>
        <begin position="178"/>
        <end position="204"/>
    </location>
</feature>
<feature type="region of interest" description="Disordered" evidence="2">
    <location>
        <begin position="226"/>
        <end position="260"/>
    </location>
</feature>
<feature type="region of interest" description="Disordered" evidence="2">
    <location>
        <begin position="443"/>
        <end position="463"/>
    </location>
</feature>
<feature type="region of interest" description="Disordered" evidence="2">
    <location>
        <begin position="478"/>
        <end position="515"/>
    </location>
</feature>
<feature type="compositionally biased region" description="Basic and acidic residues" evidence="2">
    <location>
        <begin position="178"/>
        <end position="192"/>
    </location>
</feature>
<feature type="compositionally biased region" description="Polar residues" evidence="2">
    <location>
        <begin position="193"/>
        <end position="204"/>
    </location>
</feature>
<feature type="compositionally biased region" description="Basic and acidic residues" evidence="2">
    <location>
        <begin position="226"/>
        <end position="235"/>
    </location>
</feature>
<feature type="compositionally biased region" description="Basic and acidic residues" evidence="2">
    <location>
        <begin position="478"/>
        <end position="495"/>
    </location>
</feature>
<feature type="compositionally biased region" description="Polar residues" evidence="2">
    <location>
        <begin position="496"/>
        <end position="515"/>
    </location>
</feature>
<feature type="lipid moiety-binding region" description="N-palmitoyl cysteine" evidence="1">
    <location>
        <position position="23"/>
    </location>
</feature>
<feature type="lipid moiety-binding region" description="S-diacylglycerol cysteine" evidence="1">
    <location>
        <position position="23"/>
    </location>
</feature>
<comment type="subcellular location">
    <subcellularLocation>
        <location evidence="1">Cell membrane</location>
        <topology evidence="1">Lipid-anchor</topology>
    </subcellularLocation>
</comment>
<comment type="similarity">
    <text evidence="3">Belongs to the MG185/MG260 family.</text>
</comment>
<name>Y200_MYCPN</name>